<dbReference type="EC" id="1.11.2.-" evidence="7"/>
<dbReference type="EMBL" id="U11052">
    <property type="protein sequence ID" value="AAA61568.1"/>
    <property type="status" value="ALT_FRAME"/>
    <property type="molecule type" value="mRNA"/>
</dbReference>
<dbReference type="EMBL" id="AE014296">
    <property type="protein sequence ID" value="AAF47668.1"/>
    <property type="molecule type" value="Genomic_DNA"/>
</dbReference>
<dbReference type="EMBL" id="AE014296">
    <property type="protein sequence ID" value="AAN11518.1"/>
    <property type="molecule type" value="Genomic_DNA"/>
</dbReference>
<dbReference type="EMBL" id="AE014296">
    <property type="protein sequence ID" value="AAS64946.1"/>
    <property type="molecule type" value="Genomic_DNA"/>
</dbReference>
<dbReference type="EMBL" id="AE014296">
    <property type="protein sequence ID" value="AAS64947.1"/>
    <property type="molecule type" value="Genomic_DNA"/>
</dbReference>
<dbReference type="EMBL" id="AE014296">
    <property type="protein sequence ID" value="AAS64948.1"/>
    <property type="molecule type" value="Genomic_DNA"/>
</dbReference>
<dbReference type="EMBL" id="AY051536">
    <property type="protein sequence ID" value="AAK92960.1"/>
    <property type="molecule type" value="mRNA"/>
</dbReference>
<dbReference type="EMBL" id="AY052120">
    <property type="protein sequence ID" value="AAK93544.1"/>
    <property type="molecule type" value="mRNA"/>
</dbReference>
<dbReference type="RefSeq" id="NP_523891.2">
    <molecule id="Q9VZZ4-1"/>
    <property type="nucleotide sequence ID" value="NM_079167.5"/>
</dbReference>
<dbReference type="RefSeq" id="NP_728759.1">
    <molecule id="Q9VZZ4-2"/>
    <property type="nucleotide sequence ID" value="NM_167957.3"/>
</dbReference>
<dbReference type="RefSeq" id="NP_995975.1">
    <molecule id="Q9VZZ4-1"/>
    <property type="nucleotide sequence ID" value="NM_206253.3"/>
</dbReference>
<dbReference type="RefSeq" id="NP_995976.1">
    <molecule id="Q9VZZ4-1"/>
    <property type="nucleotide sequence ID" value="NM_206254.3"/>
</dbReference>
<dbReference type="RefSeq" id="NP_995977.1">
    <molecule id="Q9VZZ4-1"/>
    <property type="nucleotide sequence ID" value="NM_206255.3"/>
</dbReference>
<dbReference type="SMR" id="Q9VZZ4"/>
<dbReference type="BioGRID" id="63831">
    <property type="interactions" value="9"/>
</dbReference>
<dbReference type="FunCoup" id="Q9VZZ4">
    <property type="interactions" value="53"/>
</dbReference>
<dbReference type="IntAct" id="Q9VZZ4">
    <property type="interactions" value="26"/>
</dbReference>
<dbReference type="STRING" id="7227.FBpp0089215"/>
<dbReference type="PeroxiBase" id="3369">
    <property type="entry name" value="DmPxd-A"/>
</dbReference>
<dbReference type="PeroxiBase" id="3370">
    <property type="entry name" value="DmPxd"/>
</dbReference>
<dbReference type="PeroxiBase" id="7646">
    <property type="entry name" value="CflPxd01"/>
</dbReference>
<dbReference type="GlyCosmos" id="Q9VZZ4">
    <property type="glycosylation" value="9 sites, No reported glycans"/>
</dbReference>
<dbReference type="GlyGen" id="Q9VZZ4">
    <property type="glycosylation" value="9 sites"/>
</dbReference>
<dbReference type="PaxDb" id="7227-FBpp0072828"/>
<dbReference type="DNASU" id="38326"/>
<dbReference type="EnsemblMetazoa" id="FBtr0072950">
    <molecule id="Q9VZZ4-2"/>
    <property type="protein sequence ID" value="FBpp0072827"/>
    <property type="gene ID" value="FBgn0011828"/>
</dbReference>
<dbReference type="EnsemblMetazoa" id="FBtr0072951">
    <molecule id="Q9VZZ4-1"/>
    <property type="protein sequence ID" value="FBpp0072828"/>
    <property type="gene ID" value="FBgn0011828"/>
</dbReference>
<dbReference type="EnsemblMetazoa" id="FBtr0072952">
    <molecule id="Q9VZZ4-1"/>
    <property type="protein sequence ID" value="FBpp0089205"/>
    <property type="gene ID" value="FBgn0011828"/>
</dbReference>
<dbReference type="EnsemblMetazoa" id="FBtr0072953">
    <molecule id="Q9VZZ4-1"/>
    <property type="protein sequence ID" value="FBpp0089215"/>
    <property type="gene ID" value="FBgn0011828"/>
</dbReference>
<dbReference type="EnsemblMetazoa" id="FBtr0072954">
    <molecule id="Q9VZZ4-1"/>
    <property type="protein sequence ID" value="FBpp0089216"/>
    <property type="gene ID" value="FBgn0011828"/>
</dbReference>
<dbReference type="GeneID" id="38326"/>
<dbReference type="KEGG" id="dme:Dmel_CG12002"/>
<dbReference type="AGR" id="FB:FBgn0011828"/>
<dbReference type="CTD" id="5829"/>
<dbReference type="FlyBase" id="FBgn0011828">
    <property type="gene designation" value="Pxn"/>
</dbReference>
<dbReference type="VEuPathDB" id="VectorBase:FBgn0011828"/>
<dbReference type="eggNOG" id="KOG0619">
    <property type="taxonomic scope" value="Eukaryota"/>
</dbReference>
<dbReference type="eggNOG" id="KOG2408">
    <property type="taxonomic scope" value="Eukaryota"/>
</dbReference>
<dbReference type="GeneTree" id="ENSGT00940000168557"/>
<dbReference type="HOGENOM" id="CLU_006087_0_1_1"/>
<dbReference type="InParanoid" id="Q9VZZ4"/>
<dbReference type="OMA" id="NIHESTF"/>
<dbReference type="OrthoDB" id="823504at2759"/>
<dbReference type="PhylomeDB" id="Q9VZZ4"/>
<dbReference type="Reactome" id="R-DME-209968">
    <property type="pathway name" value="Thyroxine biosynthesis"/>
</dbReference>
<dbReference type="Reactome" id="R-DME-6798695">
    <property type="pathway name" value="Neutrophil degranulation"/>
</dbReference>
<dbReference type="Reactome" id="R-DME-8941413">
    <property type="pathway name" value="Events associated with phagocytolytic activity of PMN cells"/>
</dbReference>
<dbReference type="SignaLink" id="Q9VZZ4"/>
<dbReference type="BioGRID-ORCS" id="38326">
    <property type="hits" value="0 hits in 3 CRISPR screens"/>
</dbReference>
<dbReference type="ChiTaRS" id="Pxn">
    <property type="organism name" value="fly"/>
</dbReference>
<dbReference type="GenomeRNAi" id="38326"/>
<dbReference type="PRO" id="PR:Q9VZZ4"/>
<dbReference type="Proteomes" id="UP000000803">
    <property type="component" value="Chromosome 3L"/>
</dbReference>
<dbReference type="Bgee" id="FBgn0011828">
    <property type="expression patterns" value="Expressed in embryonic/larval circulatory system and 145 other cell types or tissues"/>
</dbReference>
<dbReference type="ExpressionAtlas" id="Q9VZZ4">
    <property type="expression patterns" value="baseline and differential"/>
</dbReference>
<dbReference type="GO" id="GO:0031012">
    <property type="term" value="C:extracellular matrix"/>
    <property type="evidence" value="ECO:0000250"/>
    <property type="project" value="FlyBase"/>
</dbReference>
<dbReference type="GO" id="GO:0005615">
    <property type="term" value="C:extracellular space"/>
    <property type="evidence" value="ECO:0000318"/>
    <property type="project" value="GO_Central"/>
</dbReference>
<dbReference type="GO" id="GO:0020037">
    <property type="term" value="F:heme binding"/>
    <property type="evidence" value="ECO:0007669"/>
    <property type="project" value="InterPro"/>
</dbReference>
<dbReference type="GO" id="GO:0140825">
    <property type="term" value="F:lactoperoxidase activity"/>
    <property type="evidence" value="ECO:0007669"/>
    <property type="project" value="UniProtKB-EC"/>
</dbReference>
<dbReference type="GO" id="GO:0046872">
    <property type="term" value="F:metal ion binding"/>
    <property type="evidence" value="ECO:0007669"/>
    <property type="project" value="UniProtKB-KW"/>
</dbReference>
<dbReference type="GO" id="GO:0016684">
    <property type="term" value="F:oxidoreductase activity, acting on peroxide as acceptor"/>
    <property type="evidence" value="ECO:0000314"/>
    <property type="project" value="UniProtKB"/>
</dbReference>
<dbReference type="GO" id="GO:0004601">
    <property type="term" value="F:peroxidase activity"/>
    <property type="evidence" value="ECO:0000318"/>
    <property type="project" value="GO_Central"/>
</dbReference>
<dbReference type="GO" id="GO:0070831">
    <property type="term" value="P:basement membrane assembly"/>
    <property type="evidence" value="ECO:0000315"/>
    <property type="project" value="FlyBase"/>
</dbReference>
<dbReference type="GO" id="GO:0030199">
    <property type="term" value="P:collagen fibril organization"/>
    <property type="evidence" value="ECO:0000315"/>
    <property type="project" value="FlyBase"/>
</dbReference>
<dbReference type="GO" id="GO:0030198">
    <property type="term" value="P:extracellular matrix organization"/>
    <property type="evidence" value="ECO:0000315"/>
    <property type="project" value="UniProtKB"/>
</dbReference>
<dbReference type="GO" id="GO:0042744">
    <property type="term" value="P:hydrogen peroxide catabolic process"/>
    <property type="evidence" value="ECO:0007669"/>
    <property type="project" value="UniProtKB-KW"/>
</dbReference>
<dbReference type="GO" id="GO:0006909">
    <property type="term" value="P:phagocytosis"/>
    <property type="evidence" value="ECO:0000315"/>
    <property type="project" value="UniProtKB"/>
</dbReference>
<dbReference type="GO" id="GO:0006979">
    <property type="term" value="P:response to oxidative stress"/>
    <property type="evidence" value="ECO:0007669"/>
    <property type="project" value="InterPro"/>
</dbReference>
<dbReference type="CDD" id="cd09826">
    <property type="entry name" value="peroxidasin_like"/>
    <property type="match status" value="1"/>
</dbReference>
<dbReference type="FunFam" id="2.60.40.10:FF:002374">
    <property type="entry name" value="AGAP007237-PA-like protein"/>
    <property type="match status" value="1"/>
</dbReference>
<dbReference type="FunFam" id="2.60.40.10:FF:000189">
    <property type="entry name" value="Neogenin isoform 3"/>
    <property type="match status" value="1"/>
</dbReference>
<dbReference type="FunFam" id="2.60.40.10:FF:000032">
    <property type="entry name" value="palladin isoform X1"/>
    <property type="match status" value="1"/>
</dbReference>
<dbReference type="FunFam" id="2.60.40.10:FF:001851">
    <property type="entry name" value="Peroxidasin"/>
    <property type="match status" value="1"/>
</dbReference>
<dbReference type="FunFam" id="1.10.640.10:FF:000001">
    <property type="entry name" value="Peroxidasin homolog"/>
    <property type="match status" value="1"/>
</dbReference>
<dbReference type="FunFam" id="3.80.10.10:FF:001298">
    <property type="entry name" value="Uncharacterized protein, isoform B"/>
    <property type="match status" value="1"/>
</dbReference>
<dbReference type="Gene3D" id="6.20.200.20">
    <property type="match status" value="1"/>
</dbReference>
<dbReference type="Gene3D" id="1.10.640.10">
    <property type="entry name" value="Haem peroxidase domain superfamily, animal type"/>
    <property type="match status" value="1"/>
</dbReference>
<dbReference type="Gene3D" id="2.60.40.10">
    <property type="entry name" value="Immunoglobulins"/>
    <property type="match status" value="4"/>
</dbReference>
<dbReference type="Gene3D" id="3.80.10.10">
    <property type="entry name" value="Ribonuclease Inhibitor"/>
    <property type="match status" value="1"/>
</dbReference>
<dbReference type="InterPro" id="IPR019791">
    <property type="entry name" value="Haem_peroxidase_animal"/>
</dbReference>
<dbReference type="InterPro" id="IPR010255">
    <property type="entry name" value="Haem_peroxidase_sf"/>
</dbReference>
<dbReference type="InterPro" id="IPR037120">
    <property type="entry name" value="Haem_peroxidase_sf_animal"/>
</dbReference>
<dbReference type="InterPro" id="IPR007110">
    <property type="entry name" value="Ig-like_dom"/>
</dbReference>
<dbReference type="InterPro" id="IPR036179">
    <property type="entry name" value="Ig-like_dom_sf"/>
</dbReference>
<dbReference type="InterPro" id="IPR013783">
    <property type="entry name" value="Ig-like_fold"/>
</dbReference>
<dbReference type="InterPro" id="IPR013098">
    <property type="entry name" value="Ig_I-set"/>
</dbReference>
<dbReference type="InterPro" id="IPR003599">
    <property type="entry name" value="Ig_sub"/>
</dbReference>
<dbReference type="InterPro" id="IPR003598">
    <property type="entry name" value="Ig_sub2"/>
</dbReference>
<dbReference type="InterPro" id="IPR001611">
    <property type="entry name" value="Leu-rich_rpt"/>
</dbReference>
<dbReference type="InterPro" id="IPR003591">
    <property type="entry name" value="Leu-rich_rpt_typical-subtyp"/>
</dbReference>
<dbReference type="InterPro" id="IPR032675">
    <property type="entry name" value="LRR_dom_sf"/>
</dbReference>
<dbReference type="InterPro" id="IPR000372">
    <property type="entry name" value="LRRNT"/>
</dbReference>
<dbReference type="InterPro" id="IPR034824">
    <property type="entry name" value="Peroxidasin_peroxidase"/>
</dbReference>
<dbReference type="InterPro" id="IPR001007">
    <property type="entry name" value="VWF_dom"/>
</dbReference>
<dbReference type="PANTHER" id="PTHR11475">
    <property type="entry name" value="OXIDASE/PEROXIDASE"/>
    <property type="match status" value="1"/>
</dbReference>
<dbReference type="PANTHER" id="PTHR11475:SF58">
    <property type="entry name" value="PEROXIDASIN"/>
    <property type="match status" value="1"/>
</dbReference>
<dbReference type="Pfam" id="PF03098">
    <property type="entry name" value="An_peroxidase"/>
    <property type="match status" value="1"/>
</dbReference>
<dbReference type="Pfam" id="PF07679">
    <property type="entry name" value="I-set"/>
    <property type="match status" value="4"/>
</dbReference>
<dbReference type="Pfam" id="PF13855">
    <property type="entry name" value="LRR_8"/>
    <property type="match status" value="2"/>
</dbReference>
<dbReference type="Pfam" id="PF00093">
    <property type="entry name" value="VWC"/>
    <property type="match status" value="1"/>
</dbReference>
<dbReference type="PRINTS" id="PR00457">
    <property type="entry name" value="ANPEROXIDASE"/>
</dbReference>
<dbReference type="SMART" id="SM00409">
    <property type="entry name" value="IG"/>
    <property type="match status" value="4"/>
</dbReference>
<dbReference type="SMART" id="SM00408">
    <property type="entry name" value="IGc2"/>
    <property type="match status" value="4"/>
</dbReference>
<dbReference type="SMART" id="SM00369">
    <property type="entry name" value="LRR_TYP"/>
    <property type="match status" value="5"/>
</dbReference>
<dbReference type="SMART" id="SM00013">
    <property type="entry name" value="LRRNT"/>
    <property type="match status" value="1"/>
</dbReference>
<dbReference type="SMART" id="SM00214">
    <property type="entry name" value="VWC"/>
    <property type="match status" value="1"/>
</dbReference>
<dbReference type="SUPFAM" id="SSF57603">
    <property type="entry name" value="FnI-like domain"/>
    <property type="match status" value="1"/>
</dbReference>
<dbReference type="SUPFAM" id="SSF48113">
    <property type="entry name" value="Heme-dependent peroxidases"/>
    <property type="match status" value="1"/>
</dbReference>
<dbReference type="SUPFAM" id="SSF48726">
    <property type="entry name" value="Immunoglobulin"/>
    <property type="match status" value="4"/>
</dbReference>
<dbReference type="SUPFAM" id="SSF52058">
    <property type="entry name" value="L domain-like"/>
    <property type="match status" value="1"/>
</dbReference>
<dbReference type="PROSITE" id="PS50835">
    <property type="entry name" value="IG_LIKE"/>
    <property type="match status" value="4"/>
</dbReference>
<dbReference type="PROSITE" id="PS50292">
    <property type="entry name" value="PEROXIDASE_3"/>
    <property type="match status" value="1"/>
</dbReference>
<dbReference type="PROSITE" id="PS01208">
    <property type="entry name" value="VWFC_1"/>
    <property type="match status" value="1"/>
</dbReference>
<dbReference type="PROSITE" id="PS50184">
    <property type="entry name" value="VWFC_2"/>
    <property type="match status" value="1"/>
</dbReference>
<keyword id="KW-0025">Alternative splicing</keyword>
<keyword id="KW-0106">Calcium</keyword>
<keyword id="KW-0175">Coiled coil</keyword>
<keyword id="KW-1015">Disulfide bond</keyword>
<keyword id="KW-0325">Glycoprotein</keyword>
<keyword id="KW-0349">Heme</keyword>
<keyword id="KW-0376">Hydrogen peroxide</keyword>
<keyword id="KW-0393">Immunoglobulin domain</keyword>
<keyword id="KW-0408">Iron</keyword>
<keyword id="KW-0433">Leucine-rich repeat</keyword>
<keyword id="KW-0479">Metal-binding</keyword>
<keyword id="KW-0560">Oxidoreductase</keyword>
<keyword id="KW-0575">Peroxidase</keyword>
<keyword id="KW-1185">Reference proteome</keyword>
<keyword id="KW-0677">Repeat</keyword>
<keyword id="KW-0964">Secreted</keyword>
<keyword id="KW-0732">Signal</keyword>
<evidence type="ECO:0000250" key="1">
    <source>
        <dbReference type="UniProtKB" id="Q92626"/>
    </source>
</evidence>
<evidence type="ECO:0000255" key="2"/>
<evidence type="ECO:0000255" key="3">
    <source>
        <dbReference type="PROSITE-ProRule" id="PRU00114"/>
    </source>
</evidence>
<evidence type="ECO:0000255" key="4">
    <source>
        <dbReference type="PROSITE-ProRule" id="PRU00220"/>
    </source>
</evidence>
<evidence type="ECO:0000255" key="5">
    <source>
        <dbReference type="PROSITE-ProRule" id="PRU00298"/>
    </source>
</evidence>
<evidence type="ECO:0000255" key="6">
    <source>
        <dbReference type="PROSITE-ProRule" id="PRU00498"/>
    </source>
</evidence>
<evidence type="ECO:0000269" key="7">
    <source>
    </source>
</evidence>
<evidence type="ECO:0000269" key="8">
    <source>
    </source>
</evidence>
<evidence type="ECO:0000303" key="9">
    <source>
    </source>
</evidence>
<evidence type="ECO:0000305" key="10"/>
<evidence type="ECO:0000312" key="11">
    <source>
        <dbReference type="FlyBase" id="FBgn0011828"/>
    </source>
</evidence>
<organism>
    <name type="scientific">Drosophila melanogaster</name>
    <name type="common">Fruit fly</name>
    <dbReference type="NCBI Taxonomy" id="7227"/>
    <lineage>
        <taxon>Eukaryota</taxon>
        <taxon>Metazoa</taxon>
        <taxon>Ecdysozoa</taxon>
        <taxon>Arthropoda</taxon>
        <taxon>Hexapoda</taxon>
        <taxon>Insecta</taxon>
        <taxon>Pterygota</taxon>
        <taxon>Neoptera</taxon>
        <taxon>Endopterygota</taxon>
        <taxon>Diptera</taxon>
        <taxon>Brachycera</taxon>
        <taxon>Muscomorpha</taxon>
        <taxon>Ephydroidea</taxon>
        <taxon>Drosophilidae</taxon>
        <taxon>Drosophila</taxon>
        <taxon>Sophophora</taxon>
    </lineage>
</organism>
<proteinExistence type="evidence at protein level"/>
<comment type="function">
    <text evidence="7 8">Catalyzes the two-electron oxidation of bromide by hydrogen peroxide and generates hypobromite as a reactive intermediate which mediates the formation of sulfilimine cross-links between methionine and hydroxylysine residues within an uncross-linked collagen IV NC1 hexamer (PubMed:22842973). Plays a role in extracellular matrix consolidation, phagocytosis and defense (PubMed:8062820).</text>
</comment>
<comment type="catalytic activity">
    <reaction evidence="7">
        <text>(5R)-5-hydroxy-L-lysyl-[collagen] + L-methionyl-[collagen] + H2O2 = [collagen]-(5R)-5-hydroxy-L-lysyl-N-S-L-methionyl-[collagen] + 2 H2O + H(+)</text>
        <dbReference type="Rhea" id="RHEA:66008"/>
        <dbReference type="Rhea" id="RHEA-COMP:12752"/>
        <dbReference type="Rhea" id="RHEA-COMP:16949"/>
        <dbReference type="Rhea" id="RHEA-COMP:16950"/>
        <dbReference type="ChEBI" id="CHEBI:15377"/>
        <dbReference type="ChEBI" id="CHEBI:15378"/>
        <dbReference type="ChEBI" id="CHEBI:16044"/>
        <dbReference type="ChEBI" id="CHEBI:16240"/>
        <dbReference type="ChEBI" id="CHEBI:133442"/>
        <dbReference type="ChEBI" id="CHEBI:166866"/>
    </reaction>
    <physiologicalReaction direction="left-to-right" evidence="7">
        <dbReference type="Rhea" id="RHEA:66009"/>
    </physiologicalReaction>
</comment>
<comment type="catalytic activity">
    <reaction evidence="7">
        <text>bromide + H2O2 = hypobromite + H2O</text>
        <dbReference type="Rhea" id="RHEA:66016"/>
        <dbReference type="ChEBI" id="CHEBI:15377"/>
        <dbReference type="ChEBI" id="CHEBI:15858"/>
        <dbReference type="ChEBI" id="CHEBI:16240"/>
        <dbReference type="ChEBI" id="CHEBI:29250"/>
    </reaction>
    <physiologicalReaction direction="left-to-right" evidence="7">
        <dbReference type="Rhea" id="RHEA:66017"/>
    </physiologicalReaction>
</comment>
<comment type="catalytic activity">
    <reaction evidence="7">
        <text>(5R)-5-hydroxy-L-lysyl-[collagen] + L-methionyl-[collagen] + hypobromite = [collagen]-(5R)-5-hydroxy-L-lysyl-N-S-L-methionyl-[collagen] + bromide + H2O + H(+)</text>
        <dbReference type="Rhea" id="RHEA:66012"/>
        <dbReference type="Rhea" id="RHEA-COMP:12752"/>
        <dbReference type="Rhea" id="RHEA-COMP:16949"/>
        <dbReference type="Rhea" id="RHEA-COMP:16950"/>
        <dbReference type="ChEBI" id="CHEBI:15377"/>
        <dbReference type="ChEBI" id="CHEBI:15378"/>
        <dbReference type="ChEBI" id="CHEBI:15858"/>
        <dbReference type="ChEBI" id="CHEBI:16044"/>
        <dbReference type="ChEBI" id="CHEBI:29250"/>
        <dbReference type="ChEBI" id="CHEBI:133442"/>
        <dbReference type="ChEBI" id="CHEBI:166866"/>
    </reaction>
    <physiologicalReaction direction="left-to-right" evidence="7">
        <dbReference type="Rhea" id="RHEA:66013"/>
    </physiologicalReaction>
</comment>
<comment type="catalytic activity">
    <reaction evidence="1">
        <text>L-lysyl-[collagen] + L-methionyl-[collagen] + H2O2 = [collagen]-L-lysyl-N-S-L-methionyl-[collagen] + 2 H2O + H(+)</text>
        <dbReference type="Rhea" id="RHEA:66020"/>
        <dbReference type="Rhea" id="RHEA-COMP:12751"/>
        <dbReference type="Rhea" id="RHEA-COMP:16949"/>
        <dbReference type="Rhea" id="RHEA-COMP:16951"/>
        <dbReference type="ChEBI" id="CHEBI:15377"/>
        <dbReference type="ChEBI" id="CHEBI:15378"/>
        <dbReference type="ChEBI" id="CHEBI:16044"/>
        <dbReference type="ChEBI" id="CHEBI:16240"/>
        <dbReference type="ChEBI" id="CHEBI:29969"/>
        <dbReference type="ChEBI" id="CHEBI:166867"/>
    </reaction>
    <physiologicalReaction direction="left-to-right" evidence="1">
        <dbReference type="Rhea" id="RHEA:66021"/>
    </physiologicalReaction>
</comment>
<comment type="catalytic activity">
    <reaction evidence="1">
        <text>L-lysyl-[collagen] + L-methionyl-[collagen] + hypobromite = [collagen]-L-lysyl-N-S-L-methionyl-[collagen] + bromide + H2O + H(+)</text>
        <dbReference type="Rhea" id="RHEA:66024"/>
        <dbReference type="Rhea" id="RHEA-COMP:12751"/>
        <dbReference type="Rhea" id="RHEA-COMP:16949"/>
        <dbReference type="Rhea" id="RHEA-COMP:16951"/>
        <dbReference type="ChEBI" id="CHEBI:15377"/>
        <dbReference type="ChEBI" id="CHEBI:15378"/>
        <dbReference type="ChEBI" id="CHEBI:15858"/>
        <dbReference type="ChEBI" id="CHEBI:16044"/>
        <dbReference type="ChEBI" id="CHEBI:29250"/>
        <dbReference type="ChEBI" id="CHEBI:29969"/>
        <dbReference type="ChEBI" id="CHEBI:166867"/>
    </reaction>
    <physiologicalReaction direction="left-to-right" evidence="1">
        <dbReference type="Rhea" id="RHEA:66025"/>
    </physiologicalReaction>
</comment>
<comment type="catalytic activity">
    <reaction evidence="1">
        <text>L-tyrosyl-[protein] + bromide + H2O2 + H(+) = 3-bromo-L-tyrosyl-[protein] + 2 H2O</text>
        <dbReference type="Rhea" id="RHEA:69360"/>
        <dbReference type="Rhea" id="RHEA-COMP:10136"/>
        <dbReference type="Rhea" id="RHEA-COMP:17686"/>
        <dbReference type="ChEBI" id="CHEBI:15377"/>
        <dbReference type="ChEBI" id="CHEBI:15378"/>
        <dbReference type="ChEBI" id="CHEBI:15858"/>
        <dbReference type="ChEBI" id="CHEBI:16240"/>
        <dbReference type="ChEBI" id="CHEBI:46858"/>
        <dbReference type="ChEBI" id="CHEBI:183512"/>
    </reaction>
    <physiologicalReaction direction="left-to-right" evidence="1">
        <dbReference type="Rhea" id="RHEA:69361"/>
    </physiologicalReaction>
</comment>
<comment type="catalytic activity">
    <reaction evidence="1">
        <text>hypobromite + L-tyrosyl-[protein] + H(+) = 3-bromo-L-tyrosyl-[protein] + H2O</text>
        <dbReference type="Rhea" id="RHEA:69356"/>
        <dbReference type="Rhea" id="RHEA-COMP:10136"/>
        <dbReference type="Rhea" id="RHEA-COMP:17686"/>
        <dbReference type="ChEBI" id="CHEBI:15377"/>
        <dbReference type="ChEBI" id="CHEBI:15378"/>
        <dbReference type="ChEBI" id="CHEBI:29250"/>
        <dbReference type="ChEBI" id="CHEBI:46858"/>
        <dbReference type="ChEBI" id="CHEBI:183512"/>
    </reaction>
    <physiologicalReaction direction="left-to-right" evidence="1">
        <dbReference type="Rhea" id="RHEA:69357"/>
    </physiologicalReaction>
</comment>
<comment type="cofactor">
    <cofactor evidence="5">
        <name>Ca(2+)</name>
        <dbReference type="ChEBI" id="CHEBI:29108"/>
    </cofactor>
    <text evidence="5">Binds 1 Ca(2+) ion per subunit.</text>
</comment>
<comment type="cofactor">
    <cofactor evidence="5">
        <name>heme b</name>
        <dbReference type="ChEBI" id="CHEBI:60344"/>
    </cofactor>
    <text evidence="5">Binds 1 heme b (iron(II)-protoporphyrin IX) group covalently per subunit.</text>
</comment>
<comment type="subunit">
    <text evidence="8">Homotrimer; disulfide-linked.</text>
</comment>
<comment type="subcellular location">
    <subcellularLocation>
        <location evidence="10">Secreted</location>
    </subcellularLocation>
</comment>
<comment type="alternative products">
    <event type="alternative splicing"/>
    <isoform>
        <id>Q9VZZ4-1</id>
        <name>A</name>
        <name>C</name>
        <name>D</name>
        <name>E</name>
        <sequence type="displayed"/>
    </isoform>
    <isoform>
        <id>Q9VZZ4-2</id>
        <name>B</name>
        <sequence type="described" ref="VSP_032693 VSP_032694"/>
    </isoform>
</comment>
<comment type="tissue specificity">
    <text evidence="8">Expressed in hemocytes. Also expressed in the fat body and gastric caeca.</text>
</comment>
<comment type="developmental stage">
    <text evidence="8">Expressed throughout embryonic and larval development. Expressed in hemocytes as they migrate in the early embryo and later in embryogenesis, become localized to basement membranes.</text>
</comment>
<comment type="similarity">
    <text evidence="5">Belongs to the peroxidase family. XPO subfamily.</text>
</comment>
<comment type="sequence caution" evidence="10">
    <conflict type="frameshift">
        <sequence resource="EMBL-CDS" id="AAA61568"/>
    </conflict>
</comment>
<feature type="signal peptide" evidence="2">
    <location>
        <begin position="1"/>
        <end position="23"/>
    </location>
</feature>
<feature type="chain" id="PRO_0000319624" description="Peroxidasin">
    <location>
        <begin position="24"/>
        <end position="1527"/>
    </location>
</feature>
<feature type="domain" description="LRRNT">
    <location>
        <begin position="24"/>
        <end position="53"/>
    </location>
</feature>
<feature type="repeat" description="LRR 1" evidence="2">
    <location>
        <begin position="51"/>
        <end position="74"/>
    </location>
</feature>
<feature type="repeat" description="LRR 2" evidence="2">
    <location>
        <begin position="75"/>
        <end position="98"/>
    </location>
</feature>
<feature type="repeat" description="LRR 3" evidence="2">
    <location>
        <begin position="99"/>
        <end position="122"/>
    </location>
</feature>
<feature type="repeat" description="LRR 4" evidence="2">
    <location>
        <begin position="124"/>
        <end position="146"/>
    </location>
</feature>
<feature type="repeat" description="LRR 5" evidence="2">
    <location>
        <begin position="147"/>
        <end position="170"/>
    </location>
</feature>
<feature type="repeat" description="LRR 6" evidence="2">
    <location>
        <begin position="172"/>
        <end position="196"/>
    </location>
</feature>
<feature type="domain" description="Ig-like C2-type 1" evidence="3">
    <location>
        <begin position="236"/>
        <end position="322"/>
    </location>
</feature>
<feature type="domain" description="Ig-like C2-type 2" evidence="3">
    <location>
        <begin position="365"/>
        <end position="453"/>
    </location>
</feature>
<feature type="domain" description="Ig-like C2-type 3" evidence="3">
    <location>
        <begin position="458"/>
        <end position="545"/>
    </location>
</feature>
<feature type="domain" description="Ig-like C2-type 4" evidence="3">
    <location>
        <begin position="553"/>
        <end position="643"/>
    </location>
</feature>
<feature type="domain" description="VWFC" evidence="4">
    <location>
        <begin position="1463"/>
        <end position="1524"/>
    </location>
</feature>
<feature type="coiled-coil region" evidence="2">
    <location>
        <begin position="1403"/>
        <end position="1441"/>
    </location>
</feature>
<feature type="active site" description="Proton acceptor" evidence="5">
    <location>
        <position position="863"/>
    </location>
</feature>
<feature type="binding site" description="covalent" evidence="5">
    <location>
        <position position="862"/>
    </location>
    <ligand>
        <name>heme b</name>
        <dbReference type="ChEBI" id="CHEBI:60344"/>
    </ligand>
</feature>
<feature type="binding site" evidence="5">
    <location>
        <position position="864"/>
    </location>
    <ligand>
        <name>Ca(2+)</name>
        <dbReference type="ChEBI" id="CHEBI:29108"/>
    </ligand>
</feature>
<feature type="binding site" evidence="5">
    <location>
        <position position="941"/>
    </location>
    <ligand>
        <name>Ca(2+)</name>
        <dbReference type="ChEBI" id="CHEBI:29108"/>
    </ligand>
</feature>
<feature type="binding site" evidence="5">
    <location>
        <position position="943"/>
    </location>
    <ligand>
        <name>Ca(2+)</name>
        <dbReference type="ChEBI" id="CHEBI:29108"/>
    </ligand>
</feature>
<feature type="binding site" evidence="5">
    <location>
        <position position="945"/>
    </location>
    <ligand>
        <name>Ca(2+)</name>
        <dbReference type="ChEBI" id="CHEBI:29108"/>
    </ligand>
</feature>
<feature type="binding site" evidence="5">
    <location>
        <position position="947"/>
    </location>
    <ligand>
        <name>Ca(2+)</name>
        <dbReference type="ChEBI" id="CHEBI:29108"/>
    </ligand>
</feature>
<feature type="binding site" description="covalent" evidence="5">
    <location>
        <position position="1015"/>
    </location>
    <ligand>
        <name>heme b</name>
        <dbReference type="ChEBI" id="CHEBI:60344"/>
    </ligand>
</feature>
<feature type="binding site" description="axial binding residue" evidence="5">
    <location>
        <position position="1109"/>
    </location>
    <ligand>
        <name>heme b</name>
        <dbReference type="ChEBI" id="CHEBI:60344"/>
    </ligand>
    <ligandPart>
        <name>Fe</name>
        <dbReference type="ChEBI" id="CHEBI:18248"/>
    </ligandPart>
</feature>
<feature type="site" description="Transition state stabilizer" evidence="5">
    <location>
        <position position="1012"/>
    </location>
</feature>
<feature type="glycosylation site" description="N-linked (GlcNAc...) asparagine" evidence="6">
    <location>
        <position position="419"/>
    </location>
</feature>
<feature type="glycosylation site" description="N-linked (GlcNAc...) asparagine" evidence="6">
    <location>
        <position position="616"/>
    </location>
</feature>
<feature type="glycosylation site" description="N-linked (GlcNAc...) asparagine" evidence="6">
    <location>
        <position position="673"/>
    </location>
</feature>
<feature type="glycosylation site" description="N-linked (GlcNAc...) asparagine" evidence="6">
    <location>
        <position position="682"/>
    </location>
</feature>
<feature type="glycosylation site" description="N-linked (GlcNAc...) asparagine" evidence="6">
    <location>
        <position position="731"/>
    </location>
</feature>
<feature type="glycosylation site" description="N-linked (GlcNAc...) asparagine" evidence="6">
    <location>
        <position position="767"/>
    </location>
</feature>
<feature type="glycosylation site" description="N-linked (GlcNAc...) asparagine" evidence="6">
    <location>
        <position position="962"/>
    </location>
</feature>
<feature type="glycosylation site" description="N-linked (GlcNAc...) asparagine" evidence="6">
    <location>
        <position position="1120"/>
    </location>
</feature>
<feature type="glycosylation site" description="N-linked (GlcNAc...) asparagine" evidence="6">
    <location>
        <position position="1213"/>
    </location>
</feature>
<feature type="disulfide bond" evidence="3">
    <location>
        <begin position="257"/>
        <end position="307"/>
    </location>
</feature>
<feature type="disulfide bond" evidence="3">
    <location>
        <begin position="388"/>
        <end position="437"/>
    </location>
</feature>
<feature type="disulfide bond" evidence="3">
    <location>
        <begin position="479"/>
        <end position="529"/>
    </location>
</feature>
<feature type="disulfide bond" evidence="3">
    <location>
        <begin position="574"/>
        <end position="627"/>
    </location>
</feature>
<feature type="disulfide bond" evidence="5">
    <location>
        <begin position="768"/>
        <end position="784"/>
    </location>
</feature>
<feature type="disulfide bond" description="Interchain (with C-1350); in homotrimer" evidence="1">
    <location>
        <position position="772"/>
    </location>
</feature>
<feature type="disulfide bond" evidence="5">
    <location>
        <begin position="882"/>
        <end position="892"/>
    </location>
</feature>
<feature type="disulfide bond" evidence="5">
    <location>
        <begin position="886"/>
        <end position="909"/>
    </location>
</feature>
<feature type="disulfide bond" evidence="5">
    <location>
        <begin position="994"/>
        <end position="1005"/>
    </location>
</feature>
<feature type="disulfide bond" evidence="5">
    <location>
        <begin position="1212"/>
        <end position="1269"/>
    </location>
</feature>
<feature type="disulfide bond" evidence="5">
    <location>
        <begin position="1310"/>
        <end position="1336"/>
    </location>
</feature>
<feature type="disulfide bond" description="Interchain (with C-772); in homotrimer" evidence="1">
    <location>
        <position position="1350"/>
    </location>
</feature>
<feature type="splice variant" id="VSP_032693" description="In isoform B." evidence="9">
    <original>EL</original>
    <variation>GE</variation>
    <location>
        <begin position="456"/>
        <end position="457"/>
    </location>
</feature>
<feature type="splice variant" id="VSP_032694" description="In isoform B." evidence="9">
    <location>
        <begin position="458"/>
        <end position="1527"/>
    </location>
</feature>
<feature type="sequence conflict" description="In Ref. 1; AAA61568." evidence="10" ref="1">
    <original>A</original>
    <variation>G</variation>
    <location>
        <position position="128"/>
    </location>
</feature>
<feature type="sequence conflict" description="In Ref. 1; AAA61568." evidence="10" ref="1">
    <original>A</original>
    <variation>AID</variation>
    <location>
        <position position="183"/>
    </location>
</feature>
<feature type="sequence conflict" description="In Ref. 1; AAA61568." evidence="10" ref="1">
    <original>P</original>
    <variation>H</variation>
    <location>
        <position position="263"/>
    </location>
</feature>
<feature type="sequence conflict" description="In Ref. 1; AAA61568." evidence="10" ref="1">
    <original>A</original>
    <variation>T</variation>
    <location>
        <position position="282"/>
    </location>
</feature>
<feature type="sequence conflict" description="In Ref. 1; AAA61568." evidence="10" ref="1">
    <original>I</original>
    <variation>H</variation>
    <location>
        <position position="294"/>
    </location>
</feature>
<feature type="sequence conflict" description="In Ref. 1; AAA61568." evidence="10" ref="1">
    <original>M</original>
    <variation>T</variation>
    <location>
        <position position="351"/>
    </location>
</feature>
<feature type="sequence conflict" description="In Ref. 1; AAA61568." evidence="10" ref="1">
    <original>LP</original>
    <variation>SPSH</variation>
    <location>
        <begin position="361"/>
        <end position="362"/>
    </location>
</feature>
<feature type="sequence conflict" description="In Ref. 1; AAA61568." evidence="10" ref="1">
    <original>G</original>
    <variation>S</variation>
    <location>
        <position position="380"/>
    </location>
</feature>
<feature type="sequence conflict" description="In Ref. 1; AAA61568." evidence="10" ref="1">
    <original>G</original>
    <variation>D</variation>
    <location>
        <position position="692"/>
    </location>
</feature>
<feature type="sequence conflict" description="In Ref. 1; AAA61568." evidence="10" ref="1">
    <original>EL</original>
    <variation>LA</variation>
    <location>
        <begin position="959"/>
        <end position="960"/>
    </location>
</feature>
<feature type="sequence conflict" description="In Ref. 1; AAA61568." evidence="10" ref="1">
    <original>G</original>
    <variation>S</variation>
    <location>
        <position position="1083"/>
    </location>
</feature>
<name>PXDN_DROME</name>
<sequence>MRFMLLMLQLLGLLLLLAGGVQSVYCPAGCTCLERTVRCIRAKLSAVPKLPQDTQTLDLRFNHIEELPANAFSGLAQLTTLFLNDNELAYLQDGALNGLTALRFVYLNNNRLSRLPATIFQRMPRLEAIFLENNDIWQLPAGLFDNLPRLNRLIMYNNKLTQLPVDGFNRLNNLKRLRLDGNAIDCNCGVYSLWRRWHLDVQRQLVSISLTCAAPQMLQNQGFSSLGEHHFKCAKPQFLVAPQDAQVAAGEQVELSCEVTGLPRPQITWMHNTQELGLEEQAQAEILPSGSLLIRSADTSDMGIYQCIARNEMGALRSQPVRLVVNGGNHPLDSPIDARSNQVWADAGTPMHGATPLPSPLPSPPHFTHQPHDQIVALHGSGHVLLDCAASGWPQPDIQWFVNGRQLLQSTPSLQLQANGSLILLQPNQLSAGTYRCEARNSLGSVQATARIELKELPEILTAPQSQTIKLGKAFVLECDADGNPLPTIDWQLNGVPLPGNTPDLQLENENTELVVGAARQEHAGVYRCTAHNENGETSVEATIKVERSQSPPQLAIEPSNLVAITGTTIELPCQADQPEDGLQISWRHDGRLIDPNVQLAEKYQISGAGSLFVKNVTIPDGGRYECQLKNQFGRASASALVTIRNNVDLAPGDRYVRIAFAEAAKEIDLAINNTLDMLFSNRSDKAPPNYGELLRVFRFPTGEARQLARAAEIYERTLVNIRKHVQEGDNLTMKSEEYEFRDLLSREHLHLVAELSGCMEHREMPNCTDMCFHSRYRSIDGTCNNLQHPTWGASLTAFRRLAPPIYENGFSMPVGWTKGMLYSGHAKPSARLVSTSLVATKEITPDARITHMVMQWGQFLDHDLDHAIPSVSSESWDGIDCKKSCEMAPPCYPIEVPPNDPRVRNRRCIDVVRSSAICGSGMTSLFFDSVQHREQINQLTSYIDASQVYGYSTAFAQELRNLTSQEGLLRVGVHFPRQKDMLPFAAPQDGMDCRRNLDENTMSCFVSGDIRVNEQVGLLAMHTIWMREHNRIASKLKQINSHWDGDTLYQEARKIVGAQMQHITFKQWLPLIIGESGMEMMGEYQGYNPQLNPSIANEFATAALRFGHTIINPILHRLNETFQPIPQGHLLLHKAFFAPWRLAYEGGVDPLMRGFLAVPAKLKTPDQNLNTELTEKLFQTAHAVALDLAAINIQRGRDHGMPGYNVYRKLCNLTVAQDFEDLAGEISSAEIRQKMKELYGHPDNVDVWLGGILEDQVEGGKVGPLFQCLLVEQFRRLRDGDRLYYENPGVFSPEQLTQIKQANFGRVLCDVGDNFDQVTENVFILAKHQGGYKKCEDIIGINLYLWQECGRCNSPPAIFDSYIPQTYTKRSNRQKRDLGKENDEVATAESYDSPLESLYDVNEERVSGLEELIGSFQKELKKLHKKLRKLEDSCNSADSEPVAQVVQLAAAPPQLVSKPKRSHCVDDKGTTRLNNEVWSPDVCTKCNCFHGQVNCLRERCGEVSCPPGVDPLTPPEACCPHCPMVK</sequence>
<gene>
    <name evidence="11" type="primary">Pxn</name>
    <name type="ORF">CG12002</name>
</gene>
<accession>Q9VZZ4</accession>
<accession>Q23991</accession>
<accession>Q960D1</accession>
<accession>Q961K8</accession>
<reference key="1">
    <citation type="journal article" date="1994" name="EMBO J.">
        <title>Peroxidasin: a novel enzyme-matrix protein of Drosophila development.</title>
        <authorList>
            <person name="Nelson R.E."/>
            <person name="Fessler L.I."/>
            <person name="Takagi Y."/>
            <person name="Blumberg B."/>
            <person name="Keene D.R."/>
            <person name="Olson P.F."/>
            <person name="Parker C.G."/>
            <person name="Fessler J.H."/>
        </authorList>
    </citation>
    <scope>NUCLEOTIDE SEQUENCE [MRNA] (ISOFORM A)</scope>
    <scope>FUNCTION</scope>
    <scope>SUBUNIT</scope>
    <scope>TISSUE SPECIFICITY</scope>
    <scope>DEVELOPMENTAL STAGE</scope>
    <source>
        <tissue>Salivary gland</tissue>
    </source>
</reference>
<reference key="2">
    <citation type="journal article" date="2000" name="Science">
        <title>The genome sequence of Drosophila melanogaster.</title>
        <authorList>
            <person name="Adams M.D."/>
            <person name="Celniker S.E."/>
            <person name="Holt R.A."/>
            <person name="Evans C.A."/>
            <person name="Gocayne J.D."/>
            <person name="Amanatides P.G."/>
            <person name="Scherer S.E."/>
            <person name="Li P.W."/>
            <person name="Hoskins R.A."/>
            <person name="Galle R.F."/>
            <person name="George R.A."/>
            <person name="Lewis S.E."/>
            <person name="Richards S."/>
            <person name="Ashburner M."/>
            <person name="Henderson S.N."/>
            <person name="Sutton G.G."/>
            <person name="Wortman J.R."/>
            <person name="Yandell M.D."/>
            <person name="Zhang Q."/>
            <person name="Chen L.X."/>
            <person name="Brandon R.C."/>
            <person name="Rogers Y.-H.C."/>
            <person name="Blazej R.G."/>
            <person name="Champe M."/>
            <person name="Pfeiffer B.D."/>
            <person name="Wan K.H."/>
            <person name="Doyle C."/>
            <person name="Baxter E.G."/>
            <person name="Helt G."/>
            <person name="Nelson C.R."/>
            <person name="Miklos G.L.G."/>
            <person name="Abril J.F."/>
            <person name="Agbayani A."/>
            <person name="An H.-J."/>
            <person name="Andrews-Pfannkoch C."/>
            <person name="Baldwin D."/>
            <person name="Ballew R.M."/>
            <person name="Basu A."/>
            <person name="Baxendale J."/>
            <person name="Bayraktaroglu L."/>
            <person name="Beasley E.M."/>
            <person name="Beeson K.Y."/>
            <person name="Benos P.V."/>
            <person name="Berman B.P."/>
            <person name="Bhandari D."/>
            <person name="Bolshakov S."/>
            <person name="Borkova D."/>
            <person name="Botchan M.R."/>
            <person name="Bouck J."/>
            <person name="Brokstein P."/>
            <person name="Brottier P."/>
            <person name="Burtis K.C."/>
            <person name="Busam D.A."/>
            <person name="Butler H."/>
            <person name="Cadieu E."/>
            <person name="Center A."/>
            <person name="Chandra I."/>
            <person name="Cherry J.M."/>
            <person name="Cawley S."/>
            <person name="Dahlke C."/>
            <person name="Davenport L.B."/>
            <person name="Davies P."/>
            <person name="de Pablos B."/>
            <person name="Delcher A."/>
            <person name="Deng Z."/>
            <person name="Mays A.D."/>
            <person name="Dew I."/>
            <person name="Dietz S.M."/>
            <person name="Dodson K."/>
            <person name="Doup L.E."/>
            <person name="Downes M."/>
            <person name="Dugan-Rocha S."/>
            <person name="Dunkov B.C."/>
            <person name="Dunn P."/>
            <person name="Durbin K.J."/>
            <person name="Evangelista C.C."/>
            <person name="Ferraz C."/>
            <person name="Ferriera S."/>
            <person name="Fleischmann W."/>
            <person name="Fosler C."/>
            <person name="Gabrielian A.E."/>
            <person name="Garg N.S."/>
            <person name="Gelbart W.M."/>
            <person name="Glasser K."/>
            <person name="Glodek A."/>
            <person name="Gong F."/>
            <person name="Gorrell J.H."/>
            <person name="Gu Z."/>
            <person name="Guan P."/>
            <person name="Harris M."/>
            <person name="Harris N.L."/>
            <person name="Harvey D.A."/>
            <person name="Heiman T.J."/>
            <person name="Hernandez J.R."/>
            <person name="Houck J."/>
            <person name="Hostin D."/>
            <person name="Houston K.A."/>
            <person name="Howland T.J."/>
            <person name="Wei M.-H."/>
            <person name="Ibegwam C."/>
            <person name="Jalali M."/>
            <person name="Kalush F."/>
            <person name="Karpen G.H."/>
            <person name="Ke Z."/>
            <person name="Kennison J.A."/>
            <person name="Ketchum K.A."/>
            <person name="Kimmel B.E."/>
            <person name="Kodira C.D."/>
            <person name="Kraft C.L."/>
            <person name="Kravitz S."/>
            <person name="Kulp D."/>
            <person name="Lai Z."/>
            <person name="Lasko P."/>
            <person name="Lei Y."/>
            <person name="Levitsky A.A."/>
            <person name="Li J.H."/>
            <person name="Li Z."/>
            <person name="Liang Y."/>
            <person name="Lin X."/>
            <person name="Liu X."/>
            <person name="Mattei B."/>
            <person name="McIntosh T.C."/>
            <person name="McLeod M.P."/>
            <person name="McPherson D."/>
            <person name="Merkulov G."/>
            <person name="Milshina N.V."/>
            <person name="Mobarry C."/>
            <person name="Morris J."/>
            <person name="Moshrefi A."/>
            <person name="Mount S.M."/>
            <person name="Moy M."/>
            <person name="Murphy B."/>
            <person name="Murphy L."/>
            <person name="Muzny D.M."/>
            <person name="Nelson D.L."/>
            <person name="Nelson D.R."/>
            <person name="Nelson K.A."/>
            <person name="Nixon K."/>
            <person name="Nusskern D.R."/>
            <person name="Pacleb J.M."/>
            <person name="Palazzolo M."/>
            <person name="Pittman G.S."/>
            <person name="Pan S."/>
            <person name="Pollard J."/>
            <person name="Puri V."/>
            <person name="Reese M.G."/>
            <person name="Reinert K."/>
            <person name="Remington K."/>
            <person name="Saunders R.D.C."/>
            <person name="Scheeler F."/>
            <person name="Shen H."/>
            <person name="Shue B.C."/>
            <person name="Siden-Kiamos I."/>
            <person name="Simpson M."/>
            <person name="Skupski M.P."/>
            <person name="Smith T.J."/>
            <person name="Spier E."/>
            <person name="Spradling A.C."/>
            <person name="Stapleton M."/>
            <person name="Strong R."/>
            <person name="Sun E."/>
            <person name="Svirskas R."/>
            <person name="Tector C."/>
            <person name="Turner R."/>
            <person name="Venter E."/>
            <person name="Wang A.H."/>
            <person name="Wang X."/>
            <person name="Wang Z.-Y."/>
            <person name="Wassarman D.A."/>
            <person name="Weinstock G.M."/>
            <person name="Weissenbach J."/>
            <person name="Williams S.M."/>
            <person name="Woodage T."/>
            <person name="Worley K.C."/>
            <person name="Wu D."/>
            <person name="Yang S."/>
            <person name="Yao Q.A."/>
            <person name="Ye J."/>
            <person name="Yeh R.-F."/>
            <person name="Zaveri J.S."/>
            <person name="Zhan M."/>
            <person name="Zhang G."/>
            <person name="Zhao Q."/>
            <person name="Zheng L."/>
            <person name="Zheng X.H."/>
            <person name="Zhong F.N."/>
            <person name="Zhong W."/>
            <person name="Zhou X."/>
            <person name="Zhu S.C."/>
            <person name="Zhu X."/>
            <person name="Smith H.O."/>
            <person name="Gibbs R.A."/>
            <person name="Myers E.W."/>
            <person name="Rubin G.M."/>
            <person name="Venter J.C."/>
        </authorList>
    </citation>
    <scope>NUCLEOTIDE SEQUENCE [LARGE SCALE GENOMIC DNA]</scope>
    <source>
        <strain>Berkeley</strain>
    </source>
</reference>
<reference key="3">
    <citation type="journal article" date="2002" name="Genome Biol.">
        <title>Annotation of the Drosophila melanogaster euchromatic genome: a systematic review.</title>
        <authorList>
            <person name="Misra S."/>
            <person name="Crosby M.A."/>
            <person name="Mungall C.J."/>
            <person name="Matthews B.B."/>
            <person name="Campbell K.S."/>
            <person name="Hradecky P."/>
            <person name="Huang Y."/>
            <person name="Kaminker J.S."/>
            <person name="Millburn G.H."/>
            <person name="Prochnik S.E."/>
            <person name="Smith C.D."/>
            <person name="Tupy J.L."/>
            <person name="Whitfield E.J."/>
            <person name="Bayraktaroglu L."/>
            <person name="Berman B.P."/>
            <person name="Bettencourt B.R."/>
            <person name="Celniker S.E."/>
            <person name="de Grey A.D.N.J."/>
            <person name="Drysdale R.A."/>
            <person name="Harris N.L."/>
            <person name="Richter J."/>
            <person name="Russo S."/>
            <person name="Schroeder A.J."/>
            <person name="Shu S.Q."/>
            <person name="Stapleton M."/>
            <person name="Yamada C."/>
            <person name="Ashburner M."/>
            <person name="Gelbart W.M."/>
            <person name="Rubin G.M."/>
            <person name="Lewis S.E."/>
        </authorList>
    </citation>
    <scope>GENOME REANNOTATION</scope>
    <scope>ALTERNATIVE SPLICING</scope>
    <source>
        <strain>Berkeley</strain>
    </source>
</reference>
<reference key="4">
    <citation type="journal article" date="2002" name="Genome Biol.">
        <title>A Drosophila full-length cDNA resource.</title>
        <authorList>
            <person name="Stapleton M."/>
            <person name="Carlson J.W."/>
            <person name="Brokstein P."/>
            <person name="Yu C."/>
            <person name="Champe M."/>
            <person name="George R.A."/>
            <person name="Guarin H."/>
            <person name="Kronmiller B."/>
            <person name="Pacleb J.M."/>
            <person name="Park S."/>
            <person name="Wan K.H."/>
            <person name="Rubin G.M."/>
            <person name="Celniker S.E."/>
        </authorList>
    </citation>
    <scope>NUCLEOTIDE SEQUENCE [LARGE SCALE MRNA] (ISOFORM B)</scope>
    <scope>NUCLEOTIDE SEQUENCE [LARGE SCALE MRNA] OF 217-1527 (ISOFORM A)</scope>
    <source>
        <strain>Berkeley</strain>
        <tissue>Head</tissue>
    </source>
</reference>
<reference key="5">
    <citation type="journal article" date="2007" name="Glycobiology">
        <title>Identification of N-glycosylated proteins from the central nervous system of Drosophila melanogaster.</title>
        <authorList>
            <person name="Koles K."/>
            <person name="Lim J.-M."/>
            <person name="Aoki K."/>
            <person name="Porterfield M."/>
            <person name="Tiemeyer M."/>
            <person name="Wells L."/>
            <person name="Panin V."/>
        </authorList>
    </citation>
    <scope>GLYCOSYLATION [LARGE SCALE ANALYSIS] AT ASN-962</scope>
    <scope>IDENTIFICATION BY MASS SPECTROMETRY</scope>
    <source>
        <strain>Oregon-R</strain>
        <tissue>Head</tissue>
    </source>
</reference>
<reference key="6">
    <citation type="journal article" date="2012" name="Nat. Chem. Biol.">
        <title>Peroxidasin forms sulfilimine chemical bonds using hypohalous acids in tissue genesis.</title>
        <authorList>
            <person name="Bhave G."/>
            <person name="Cummings C.F."/>
            <person name="Vanacore R.M."/>
            <person name="Kumagai-Cresse C."/>
            <person name="Ero-Tolliver I.A."/>
            <person name="Rafi M."/>
            <person name="Kang J.S."/>
            <person name="Pedchenko V."/>
            <person name="Fessler L.I."/>
            <person name="Fessler J.H."/>
            <person name="Hudson B.G."/>
        </authorList>
    </citation>
    <scope>CATALYTIC ACTIVITY</scope>
    <scope>FUNCTION</scope>
</reference>
<protein>
    <recommendedName>
        <fullName evidence="10">Peroxidasin</fullName>
        <ecNumber evidence="7">1.11.2.-</ecNumber>
    </recommendedName>
</protein>